<organism>
    <name type="scientific">Aeromonas salmonicida (strain A449)</name>
    <dbReference type="NCBI Taxonomy" id="382245"/>
    <lineage>
        <taxon>Bacteria</taxon>
        <taxon>Pseudomonadati</taxon>
        <taxon>Pseudomonadota</taxon>
        <taxon>Gammaproteobacteria</taxon>
        <taxon>Aeromonadales</taxon>
        <taxon>Aeromonadaceae</taxon>
        <taxon>Aeromonas</taxon>
    </lineage>
</organism>
<evidence type="ECO:0000255" key="1">
    <source>
        <dbReference type="HAMAP-Rule" id="MF_00811"/>
    </source>
</evidence>
<gene>
    <name evidence="1" type="primary">dapD</name>
    <name type="ordered locus">ASA_3164</name>
</gene>
<sequence length="275" mass="29522">MTELQQIIEAAFERRDSITPGSVDAATKSAILQTIDLLDAGKARVAEKIAGEWVVHQWLKKAVLLYFRINDNGIIKGDDAQYYDKVPLKFSDYTAEQFKEAGVRVVPPATARKGSFIAPNTVLMPSYVNIGAFVDEGTMVDTWATVGSCAQIGKNVHLSGGVGIGGVLEPLQANPTIIEDNCFIGARSEVVEGVIVEEGSVISMGVFIGQSTRIYDRETGEIHYGRVPAGSVVVSGSLPSKCGKYSLYAAVIVKKVDAKTRAKVGINALLRSIDE</sequence>
<feature type="chain" id="PRO_1000047115" description="2,3,4,5-tetrahydropyridine-2,6-dicarboxylate N-succinyltransferase">
    <location>
        <begin position="1"/>
        <end position="275"/>
    </location>
</feature>
<feature type="binding site" evidence="1">
    <location>
        <position position="104"/>
    </location>
    <ligand>
        <name>substrate</name>
    </ligand>
</feature>
<feature type="binding site" evidence="1">
    <location>
        <position position="141"/>
    </location>
    <ligand>
        <name>substrate</name>
    </ligand>
</feature>
<protein>
    <recommendedName>
        <fullName evidence="1">2,3,4,5-tetrahydropyridine-2,6-dicarboxylate N-succinyltransferase</fullName>
        <ecNumber evidence="1">2.3.1.117</ecNumber>
    </recommendedName>
    <alternativeName>
        <fullName evidence="1">Tetrahydrodipicolinate N-succinyltransferase</fullName>
        <shortName evidence="1">THDP succinyltransferase</shortName>
        <shortName evidence="1">THP succinyltransferase</shortName>
        <shortName evidence="1">Tetrahydropicolinate succinylase</shortName>
    </alternativeName>
</protein>
<keyword id="KW-0012">Acyltransferase</keyword>
<keyword id="KW-0028">Amino-acid biosynthesis</keyword>
<keyword id="KW-0963">Cytoplasm</keyword>
<keyword id="KW-0220">Diaminopimelate biosynthesis</keyword>
<keyword id="KW-0457">Lysine biosynthesis</keyword>
<keyword id="KW-0677">Repeat</keyword>
<keyword id="KW-0808">Transferase</keyword>
<comment type="catalytic activity">
    <reaction evidence="1">
        <text>(S)-2,3,4,5-tetrahydrodipicolinate + succinyl-CoA + H2O = (S)-2-succinylamino-6-oxoheptanedioate + CoA</text>
        <dbReference type="Rhea" id="RHEA:17325"/>
        <dbReference type="ChEBI" id="CHEBI:15377"/>
        <dbReference type="ChEBI" id="CHEBI:15685"/>
        <dbReference type="ChEBI" id="CHEBI:16845"/>
        <dbReference type="ChEBI" id="CHEBI:57287"/>
        <dbReference type="ChEBI" id="CHEBI:57292"/>
        <dbReference type="EC" id="2.3.1.117"/>
    </reaction>
</comment>
<comment type="pathway">
    <text evidence="1">Amino-acid biosynthesis; L-lysine biosynthesis via DAP pathway; LL-2,6-diaminopimelate from (S)-tetrahydrodipicolinate (succinylase route): step 1/3.</text>
</comment>
<comment type="subunit">
    <text evidence="1">Homotrimer.</text>
</comment>
<comment type="subcellular location">
    <subcellularLocation>
        <location evidence="1">Cytoplasm</location>
    </subcellularLocation>
</comment>
<comment type="similarity">
    <text evidence="1">Belongs to the transferase hexapeptide repeat family.</text>
</comment>
<reference key="1">
    <citation type="journal article" date="2008" name="BMC Genomics">
        <title>The genome of Aeromonas salmonicida subsp. salmonicida A449: insights into the evolution of a fish pathogen.</title>
        <authorList>
            <person name="Reith M.E."/>
            <person name="Singh R.K."/>
            <person name="Curtis B."/>
            <person name="Boyd J.M."/>
            <person name="Bouevitch A."/>
            <person name="Kimball J."/>
            <person name="Munholland J."/>
            <person name="Murphy C."/>
            <person name="Sarty D."/>
            <person name="Williams J."/>
            <person name="Nash J.H."/>
            <person name="Johnson S.C."/>
            <person name="Brown L.L."/>
        </authorList>
    </citation>
    <scope>NUCLEOTIDE SEQUENCE [LARGE SCALE GENOMIC DNA]</scope>
    <source>
        <strain>A449</strain>
    </source>
</reference>
<dbReference type="EC" id="2.3.1.117" evidence="1"/>
<dbReference type="EMBL" id="CP000644">
    <property type="protein sequence ID" value="ABO91157.1"/>
    <property type="molecule type" value="Genomic_DNA"/>
</dbReference>
<dbReference type="RefSeq" id="WP_005312067.1">
    <property type="nucleotide sequence ID" value="NC_009348.1"/>
</dbReference>
<dbReference type="SMR" id="A4SQI5"/>
<dbReference type="STRING" id="29491.GCA_000820065_03544"/>
<dbReference type="GeneID" id="79880887"/>
<dbReference type="KEGG" id="asa:ASA_3164"/>
<dbReference type="eggNOG" id="COG2171">
    <property type="taxonomic scope" value="Bacteria"/>
</dbReference>
<dbReference type="HOGENOM" id="CLU_050859_0_1_6"/>
<dbReference type="UniPathway" id="UPA00034">
    <property type="reaction ID" value="UER00019"/>
</dbReference>
<dbReference type="Proteomes" id="UP000000225">
    <property type="component" value="Chromosome"/>
</dbReference>
<dbReference type="GO" id="GO:0005737">
    <property type="term" value="C:cytoplasm"/>
    <property type="evidence" value="ECO:0007669"/>
    <property type="project" value="UniProtKB-SubCell"/>
</dbReference>
<dbReference type="GO" id="GO:0008666">
    <property type="term" value="F:2,3,4,5-tetrahydropyridine-2,6-dicarboxylate N-succinyltransferase activity"/>
    <property type="evidence" value="ECO:0007669"/>
    <property type="project" value="UniProtKB-UniRule"/>
</dbReference>
<dbReference type="GO" id="GO:0016779">
    <property type="term" value="F:nucleotidyltransferase activity"/>
    <property type="evidence" value="ECO:0007669"/>
    <property type="project" value="TreeGrafter"/>
</dbReference>
<dbReference type="GO" id="GO:0019877">
    <property type="term" value="P:diaminopimelate biosynthetic process"/>
    <property type="evidence" value="ECO:0007669"/>
    <property type="project" value="UniProtKB-UniRule"/>
</dbReference>
<dbReference type="GO" id="GO:0009089">
    <property type="term" value="P:lysine biosynthetic process via diaminopimelate"/>
    <property type="evidence" value="ECO:0007669"/>
    <property type="project" value="UniProtKB-UniRule"/>
</dbReference>
<dbReference type="CDD" id="cd03350">
    <property type="entry name" value="LbH_THP_succinylT"/>
    <property type="match status" value="1"/>
</dbReference>
<dbReference type="Gene3D" id="2.160.10.10">
    <property type="entry name" value="Hexapeptide repeat proteins"/>
    <property type="match status" value="1"/>
</dbReference>
<dbReference type="Gene3D" id="1.10.166.10">
    <property type="entry name" value="Tetrahydrodipicolinate-N-succinyltransferase, N-terminal domain"/>
    <property type="match status" value="1"/>
</dbReference>
<dbReference type="HAMAP" id="MF_00811">
    <property type="entry name" value="DapD"/>
    <property type="match status" value="1"/>
</dbReference>
<dbReference type="InterPro" id="IPR005664">
    <property type="entry name" value="DapD_Trfase_Hexpep_rpt_fam"/>
</dbReference>
<dbReference type="InterPro" id="IPR001451">
    <property type="entry name" value="Hexapep"/>
</dbReference>
<dbReference type="InterPro" id="IPR018357">
    <property type="entry name" value="Hexapep_transf_CS"/>
</dbReference>
<dbReference type="InterPro" id="IPR023180">
    <property type="entry name" value="THP_succinylTrfase_dom1"/>
</dbReference>
<dbReference type="InterPro" id="IPR037133">
    <property type="entry name" value="THP_succinylTrfase_N_sf"/>
</dbReference>
<dbReference type="InterPro" id="IPR011004">
    <property type="entry name" value="Trimer_LpxA-like_sf"/>
</dbReference>
<dbReference type="NCBIfam" id="TIGR00965">
    <property type="entry name" value="dapD"/>
    <property type="match status" value="1"/>
</dbReference>
<dbReference type="NCBIfam" id="NF008808">
    <property type="entry name" value="PRK11830.1"/>
    <property type="match status" value="1"/>
</dbReference>
<dbReference type="PANTHER" id="PTHR19136:SF52">
    <property type="entry name" value="2,3,4,5-TETRAHYDROPYRIDINE-2,6-DICARBOXYLATE N-SUCCINYLTRANSFERASE"/>
    <property type="match status" value="1"/>
</dbReference>
<dbReference type="PANTHER" id="PTHR19136">
    <property type="entry name" value="MOLYBDENUM COFACTOR GUANYLYLTRANSFERASE"/>
    <property type="match status" value="1"/>
</dbReference>
<dbReference type="Pfam" id="PF14602">
    <property type="entry name" value="Hexapep_2"/>
    <property type="match status" value="1"/>
</dbReference>
<dbReference type="Pfam" id="PF14805">
    <property type="entry name" value="THDPS_N_2"/>
    <property type="match status" value="1"/>
</dbReference>
<dbReference type="SUPFAM" id="SSF51161">
    <property type="entry name" value="Trimeric LpxA-like enzymes"/>
    <property type="match status" value="1"/>
</dbReference>
<dbReference type="PROSITE" id="PS00101">
    <property type="entry name" value="HEXAPEP_TRANSFERASES"/>
    <property type="match status" value="1"/>
</dbReference>
<proteinExistence type="inferred from homology"/>
<accession>A4SQI5</accession>
<name>DAPD_AERS4</name>